<proteinExistence type="inferred from homology"/>
<dbReference type="EC" id="2.6.99.2" evidence="1"/>
<dbReference type="EMBL" id="CR378673">
    <property type="protein sequence ID" value="CAG21402.1"/>
    <property type="molecule type" value="Genomic_DNA"/>
</dbReference>
<dbReference type="RefSeq" id="WP_011219661.1">
    <property type="nucleotide sequence ID" value="NC_006370.1"/>
</dbReference>
<dbReference type="SMR" id="Q3V7I6"/>
<dbReference type="STRING" id="298386.PBPRA3086"/>
<dbReference type="KEGG" id="ppr:PBPRA3086"/>
<dbReference type="eggNOG" id="COG0854">
    <property type="taxonomic scope" value="Bacteria"/>
</dbReference>
<dbReference type="HOGENOM" id="CLU_074563_0_0_6"/>
<dbReference type="UniPathway" id="UPA00244">
    <property type="reaction ID" value="UER00313"/>
</dbReference>
<dbReference type="Proteomes" id="UP000000593">
    <property type="component" value="Chromosome 1"/>
</dbReference>
<dbReference type="GO" id="GO:0005829">
    <property type="term" value="C:cytosol"/>
    <property type="evidence" value="ECO:0007669"/>
    <property type="project" value="TreeGrafter"/>
</dbReference>
<dbReference type="GO" id="GO:0033856">
    <property type="term" value="F:pyridoxine 5'-phosphate synthase activity"/>
    <property type="evidence" value="ECO:0007669"/>
    <property type="project" value="UniProtKB-EC"/>
</dbReference>
<dbReference type="GO" id="GO:0008615">
    <property type="term" value="P:pyridoxine biosynthetic process"/>
    <property type="evidence" value="ECO:0007669"/>
    <property type="project" value="UniProtKB-UniRule"/>
</dbReference>
<dbReference type="CDD" id="cd00003">
    <property type="entry name" value="PNPsynthase"/>
    <property type="match status" value="1"/>
</dbReference>
<dbReference type="FunFam" id="3.20.20.70:FF:000042">
    <property type="entry name" value="Pyridoxine 5'-phosphate synthase"/>
    <property type="match status" value="1"/>
</dbReference>
<dbReference type="Gene3D" id="3.20.20.70">
    <property type="entry name" value="Aldolase class I"/>
    <property type="match status" value="1"/>
</dbReference>
<dbReference type="HAMAP" id="MF_00279">
    <property type="entry name" value="PdxJ"/>
    <property type="match status" value="1"/>
</dbReference>
<dbReference type="InterPro" id="IPR013785">
    <property type="entry name" value="Aldolase_TIM"/>
</dbReference>
<dbReference type="InterPro" id="IPR004569">
    <property type="entry name" value="PyrdxlP_synth_PdxJ"/>
</dbReference>
<dbReference type="InterPro" id="IPR036130">
    <property type="entry name" value="Pyridoxine-5'_phos_synth"/>
</dbReference>
<dbReference type="NCBIfam" id="TIGR00559">
    <property type="entry name" value="pdxJ"/>
    <property type="match status" value="1"/>
</dbReference>
<dbReference type="NCBIfam" id="NF003623">
    <property type="entry name" value="PRK05265.1-1"/>
    <property type="match status" value="1"/>
</dbReference>
<dbReference type="NCBIfam" id="NF003624">
    <property type="entry name" value="PRK05265.1-2"/>
    <property type="match status" value="1"/>
</dbReference>
<dbReference type="NCBIfam" id="NF003625">
    <property type="entry name" value="PRK05265.1-3"/>
    <property type="match status" value="1"/>
</dbReference>
<dbReference type="NCBIfam" id="NF003627">
    <property type="entry name" value="PRK05265.1-5"/>
    <property type="match status" value="1"/>
</dbReference>
<dbReference type="PANTHER" id="PTHR30456">
    <property type="entry name" value="PYRIDOXINE 5'-PHOSPHATE SYNTHASE"/>
    <property type="match status" value="1"/>
</dbReference>
<dbReference type="PANTHER" id="PTHR30456:SF0">
    <property type="entry name" value="PYRIDOXINE 5'-PHOSPHATE SYNTHASE"/>
    <property type="match status" value="1"/>
</dbReference>
<dbReference type="Pfam" id="PF03740">
    <property type="entry name" value="PdxJ"/>
    <property type="match status" value="1"/>
</dbReference>
<dbReference type="SUPFAM" id="SSF63892">
    <property type="entry name" value="Pyridoxine 5'-phosphate synthase"/>
    <property type="match status" value="1"/>
</dbReference>
<gene>
    <name evidence="1" type="primary">pdxJ</name>
    <name type="ordered locus">PBPRA3086</name>
</gene>
<evidence type="ECO:0000255" key="1">
    <source>
        <dbReference type="HAMAP-Rule" id="MF_00279"/>
    </source>
</evidence>
<keyword id="KW-0963">Cytoplasm</keyword>
<keyword id="KW-0664">Pyridoxine biosynthesis</keyword>
<keyword id="KW-1185">Reference proteome</keyword>
<keyword id="KW-0808">Transferase</keyword>
<sequence length="243" mass="26534">MNNILLGVNIDHIATLRNARGTRYPDPVHAAEVAERAGADGITVHLREDRRHINDRDVRILKETIQTRMNLEMAVTDEMVSIALDTKPEFVCLVPEKREELTTEGGLDVAGQLEKIKAATQKLTDAGIKVSLFIDADRAQIDATLACGAPFVELHTGHYADAETEEAQQAELEKIASAATYAHGLGIKVNAGHGLTYHNVKPIAALPELYELNIGHSIISRAAFDGLNKAVADMKVEMLDARR</sequence>
<organism>
    <name type="scientific">Photobacterium profundum (strain SS9)</name>
    <dbReference type="NCBI Taxonomy" id="298386"/>
    <lineage>
        <taxon>Bacteria</taxon>
        <taxon>Pseudomonadati</taxon>
        <taxon>Pseudomonadota</taxon>
        <taxon>Gammaproteobacteria</taxon>
        <taxon>Vibrionales</taxon>
        <taxon>Vibrionaceae</taxon>
        <taxon>Photobacterium</taxon>
    </lineage>
</organism>
<protein>
    <recommendedName>
        <fullName evidence="1">Pyridoxine 5'-phosphate synthase</fullName>
        <shortName evidence="1">PNP synthase</shortName>
        <ecNumber evidence="1">2.6.99.2</ecNumber>
    </recommendedName>
</protein>
<comment type="function">
    <text evidence="1">Catalyzes the complicated ring closure reaction between the two acyclic compounds 1-deoxy-D-xylulose-5-phosphate (DXP) and 3-amino-2-oxopropyl phosphate (1-amino-acetone-3-phosphate or AAP) to form pyridoxine 5'-phosphate (PNP) and inorganic phosphate.</text>
</comment>
<comment type="catalytic activity">
    <reaction evidence="1">
        <text>3-amino-2-oxopropyl phosphate + 1-deoxy-D-xylulose 5-phosphate = pyridoxine 5'-phosphate + phosphate + 2 H2O + H(+)</text>
        <dbReference type="Rhea" id="RHEA:15265"/>
        <dbReference type="ChEBI" id="CHEBI:15377"/>
        <dbReference type="ChEBI" id="CHEBI:15378"/>
        <dbReference type="ChEBI" id="CHEBI:43474"/>
        <dbReference type="ChEBI" id="CHEBI:57279"/>
        <dbReference type="ChEBI" id="CHEBI:57792"/>
        <dbReference type="ChEBI" id="CHEBI:58589"/>
        <dbReference type="EC" id="2.6.99.2"/>
    </reaction>
</comment>
<comment type="pathway">
    <text evidence="1">Cofactor biosynthesis; pyridoxine 5'-phosphate biosynthesis; pyridoxine 5'-phosphate from D-erythrose 4-phosphate: step 5/5.</text>
</comment>
<comment type="subunit">
    <text evidence="1">Homooctamer; tetramer of dimers.</text>
</comment>
<comment type="subcellular location">
    <subcellularLocation>
        <location evidence="1">Cytoplasm</location>
    </subcellularLocation>
</comment>
<comment type="similarity">
    <text evidence="1">Belongs to the PNP synthase family.</text>
</comment>
<name>PDXJ_PHOPR</name>
<accession>Q3V7I6</accession>
<reference key="1">
    <citation type="journal article" date="2005" name="Science">
        <title>Life at depth: Photobacterium profundum genome sequence and expression analysis.</title>
        <authorList>
            <person name="Vezzi A."/>
            <person name="Campanaro S."/>
            <person name="D'Angelo M."/>
            <person name="Simonato F."/>
            <person name="Vitulo N."/>
            <person name="Lauro F.M."/>
            <person name="Cestaro A."/>
            <person name="Malacrida G."/>
            <person name="Simionati B."/>
            <person name="Cannata N."/>
            <person name="Romualdi C."/>
            <person name="Bartlett D.H."/>
            <person name="Valle G."/>
        </authorList>
    </citation>
    <scope>NUCLEOTIDE SEQUENCE [LARGE SCALE GENOMIC DNA]</scope>
    <source>
        <strain>ATCC BAA-1253 / SS9</strain>
    </source>
</reference>
<feature type="chain" id="PRO_0000231826" description="Pyridoxine 5'-phosphate synthase">
    <location>
        <begin position="1"/>
        <end position="243"/>
    </location>
</feature>
<feature type="active site" description="Proton acceptor" evidence="1">
    <location>
        <position position="45"/>
    </location>
</feature>
<feature type="active site" description="Proton acceptor" evidence="1">
    <location>
        <position position="72"/>
    </location>
</feature>
<feature type="active site" description="Proton donor" evidence="1">
    <location>
        <position position="193"/>
    </location>
</feature>
<feature type="binding site" evidence="1">
    <location>
        <position position="9"/>
    </location>
    <ligand>
        <name>3-amino-2-oxopropyl phosphate</name>
        <dbReference type="ChEBI" id="CHEBI:57279"/>
    </ligand>
</feature>
<feature type="binding site" evidence="1">
    <location>
        <begin position="11"/>
        <end position="12"/>
    </location>
    <ligand>
        <name>1-deoxy-D-xylulose 5-phosphate</name>
        <dbReference type="ChEBI" id="CHEBI:57792"/>
    </ligand>
</feature>
<feature type="binding site" evidence="1">
    <location>
        <position position="20"/>
    </location>
    <ligand>
        <name>3-amino-2-oxopropyl phosphate</name>
        <dbReference type="ChEBI" id="CHEBI:57279"/>
    </ligand>
</feature>
<feature type="binding site" evidence="1">
    <location>
        <position position="47"/>
    </location>
    <ligand>
        <name>1-deoxy-D-xylulose 5-phosphate</name>
        <dbReference type="ChEBI" id="CHEBI:57792"/>
    </ligand>
</feature>
<feature type="binding site" evidence="1">
    <location>
        <position position="52"/>
    </location>
    <ligand>
        <name>1-deoxy-D-xylulose 5-phosphate</name>
        <dbReference type="ChEBI" id="CHEBI:57792"/>
    </ligand>
</feature>
<feature type="binding site" evidence="1">
    <location>
        <position position="102"/>
    </location>
    <ligand>
        <name>1-deoxy-D-xylulose 5-phosphate</name>
        <dbReference type="ChEBI" id="CHEBI:57792"/>
    </ligand>
</feature>
<feature type="binding site" evidence="1">
    <location>
        <position position="194"/>
    </location>
    <ligand>
        <name>3-amino-2-oxopropyl phosphate</name>
        <dbReference type="ChEBI" id="CHEBI:57279"/>
    </ligand>
</feature>
<feature type="binding site" evidence="1">
    <location>
        <begin position="215"/>
        <end position="216"/>
    </location>
    <ligand>
        <name>3-amino-2-oxopropyl phosphate</name>
        <dbReference type="ChEBI" id="CHEBI:57279"/>
    </ligand>
</feature>
<feature type="site" description="Transition state stabilizer" evidence="1">
    <location>
        <position position="153"/>
    </location>
</feature>